<feature type="chain" id="PRO_0000238389" description="ATP synthase subunit alpha">
    <location>
        <begin position="1"/>
        <end position="513"/>
    </location>
</feature>
<feature type="binding site" evidence="1">
    <location>
        <begin position="169"/>
        <end position="176"/>
    </location>
    <ligand>
        <name>ATP</name>
        <dbReference type="ChEBI" id="CHEBI:30616"/>
    </ligand>
</feature>
<feature type="site" description="Required for activity" evidence="1">
    <location>
        <position position="373"/>
    </location>
</feature>
<organism>
    <name type="scientific">Hydrogenovibrio crunogenus (strain DSM 25203 / XCL-2)</name>
    <name type="common">Thiomicrospira crunogena</name>
    <dbReference type="NCBI Taxonomy" id="317025"/>
    <lineage>
        <taxon>Bacteria</taxon>
        <taxon>Pseudomonadati</taxon>
        <taxon>Pseudomonadota</taxon>
        <taxon>Gammaproteobacteria</taxon>
        <taxon>Thiotrichales</taxon>
        <taxon>Piscirickettsiaceae</taxon>
        <taxon>Hydrogenovibrio</taxon>
    </lineage>
</organism>
<sequence length="513" mass="55099">MQLNASEISNLIKDRIKGFDGAAESGSEGTVVSIADGIALIHGVSDVMYGEMVQFDEATFGMALNLERDSVGVVVLGEYEHISEGDKVTCTGRILEVPVGPELNGRVVDGLGRPIDGKGSIDAKVTSPIERIAPGVIERQSVDQPMMTGIKSIDSMIPVGRGQRELIIGDRQTGKTAIAIDAIISQKNTGVKCIYVAMGQKASTVNNVARKLEEYGAMDNTVIVAANASDPAALQYLAAYAGCAMGEYYRDRGEDALIIYDDLTKQAQAYRQISLLLRRPPGREAFPGDVFYLHSRLLERAARVNAEYVEKFTNGEVKGKTGSLTALPIIETQAGDVSAFVPTNVISITDGQIFLETGLFSQGIRPAVNAGLSVSRVGGSAQTKAIKKLGGGIRLDLAQYRELAAFAQFASDLDPATKAQLERGKRVTELMKQKQYSPLTIAEMAVSLYAANEGYLDDVEVEKVLDFEAALHAYLNSNNADLAAKINAKGDWNDEIISEVKAMIDAFKANGVY</sequence>
<proteinExistence type="inferred from homology"/>
<gene>
    <name evidence="1" type="primary">atpA</name>
    <name type="ordered locus">Tcr_2167</name>
</gene>
<dbReference type="EC" id="7.1.2.2" evidence="1"/>
<dbReference type="EMBL" id="CP000109">
    <property type="protein sequence ID" value="ABB42755.1"/>
    <property type="molecule type" value="Genomic_DNA"/>
</dbReference>
<dbReference type="SMR" id="Q31DL8"/>
<dbReference type="STRING" id="317025.Tcr_2167"/>
<dbReference type="KEGG" id="tcx:Tcr_2167"/>
<dbReference type="eggNOG" id="COG0056">
    <property type="taxonomic scope" value="Bacteria"/>
</dbReference>
<dbReference type="HOGENOM" id="CLU_010091_2_1_6"/>
<dbReference type="OrthoDB" id="9803053at2"/>
<dbReference type="GO" id="GO:0005886">
    <property type="term" value="C:plasma membrane"/>
    <property type="evidence" value="ECO:0007669"/>
    <property type="project" value="UniProtKB-SubCell"/>
</dbReference>
<dbReference type="GO" id="GO:0045259">
    <property type="term" value="C:proton-transporting ATP synthase complex"/>
    <property type="evidence" value="ECO:0007669"/>
    <property type="project" value="UniProtKB-KW"/>
</dbReference>
<dbReference type="GO" id="GO:0043531">
    <property type="term" value="F:ADP binding"/>
    <property type="evidence" value="ECO:0007669"/>
    <property type="project" value="TreeGrafter"/>
</dbReference>
<dbReference type="GO" id="GO:0005524">
    <property type="term" value="F:ATP binding"/>
    <property type="evidence" value="ECO:0007669"/>
    <property type="project" value="UniProtKB-UniRule"/>
</dbReference>
<dbReference type="GO" id="GO:0046933">
    <property type="term" value="F:proton-transporting ATP synthase activity, rotational mechanism"/>
    <property type="evidence" value="ECO:0007669"/>
    <property type="project" value="UniProtKB-UniRule"/>
</dbReference>
<dbReference type="CDD" id="cd18113">
    <property type="entry name" value="ATP-synt_F1_alpha_C"/>
    <property type="match status" value="1"/>
</dbReference>
<dbReference type="CDD" id="cd18116">
    <property type="entry name" value="ATP-synt_F1_alpha_N"/>
    <property type="match status" value="1"/>
</dbReference>
<dbReference type="CDD" id="cd01132">
    <property type="entry name" value="F1-ATPase_alpha_CD"/>
    <property type="match status" value="1"/>
</dbReference>
<dbReference type="FunFam" id="1.20.150.20:FF:000001">
    <property type="entry name" value="ATP synthase subunit alpha"/>
    <property type="match status" value="1"/>
</dbReference>
<dbReference type="FunFam" id="2.40.30.20:FF:000001">
    <property type="entry name" value="ATP synthase subunit alpha"/>
    <property type="match status" value="1"/>
</dbReference>
<dbReference type="FunFam" id="3.40.50.300:FF:000002">
    <property type="entry name" value="ATP synthase subunit alpha"/>
    <property type="match status" value="1"/>
</dbReference>
<dbReference type="Gene3D" id="2.40.30.20">
    <property type="match status" value="1"/>
</dbReference>
<dbReference type="Gene3D" id="1.20.150.20">
    <property type="entry name" value="ATP synthase alpha/beta chain, C-terminal domain"/>
    <property type="match status" value="1"/>
</dbReference>
<dbReference type="Gene3D" id="3.40.50.300">
    <property type="entry name" value="P-loop containing nucleotide triphosphate hydrolases"/>
    <property type="match status" value="1"/>
</dbReference>
<dbReference type="HAMAP" id="MF_01346">
    <property type="entry name" value="ATP_synth_alpha_bact"/>
    <property type="match status" value="1"/>
</dbReference>
<dbReference type="InterPro" id="IPR023366">
    <property type="entry name" value="ATP_synth_asu-like_sf"/>
</dbReference>
<dbReference type="InterPro" id="IPR000793">
    <property type="entry name" value="ATP_synth_asu_C"/>
</dbReference>
<dbReference type="InterPro" id="IPR038376">
    <property type="entry name" value="ATP_synth_asu_C_sf"/>
</dbReference>
<dbReference type="InterPro" id="IPR033732">
    <property type="entry name" value="ATP_synth_F1_a_nt-bd_dom"/>
</dbReference>
<dbReference type="InterPro" id="IPR005294">
    <property type="entry name" value="ATP_synth_F1_asu"/>
</dbReference>
<dbReference type="InterPro" id="IPR020003">
    <property type="entry name" value="ATPase_a/bsu_AS"/>
</dbReference>
<dbReference type="InterPro" id="IPR004100">
    <property type="entry name" value="ATPase_F1/V1/A1_a/bsu_N"/>
</dbReference>
<dbReference type="InterPro" id="IPR036121">
    <property type="entry name" value="ATPase_F1/V1/A1_a/bsu_N_sf"/>
</dbReference>
<dbReference type="InterPro" id="IPR000194">
    <property type="entry name" value="ATPase_F1/V1/A1_a/bsu_nucl-bd"/>
</dbReference>
<dbReference type="InterPro" id="IPR027417">
    <property type="entry name" value="P-loop_NTPase"/>
</dbReference>
<dbReference type="NCBIfam" id="TIGR00962">
    <property type="entry name" value="atpA"/>
    <property type="match status" value="1"/>
</dbReference>
<dbReference type="NCBIfam" id="NF009884">
    <property type="entry name" value="PRK13343.1"/>
    <property type="match status" value="1"/>
</dbReference>
<dbReference type="PANTHER" id="PTHR48082">
    <property type="entry name" value="ATP SYNTHASE SUBUNIT ALPHA, MITOCHONDRIAL"/>
    <property type="match status" value="1"/>
</dbReference>
<dbReference type="PANTHER" id="PTHR48082:SF2">
    <property type="entry name" value="ATP SYNTHASE SUBUNIT ALPHA, MITOCHONDRIAL"/>
    <property type="match status" value="1"/>
</dbReference>
<dbReference type="Pfam" id="PF00006">
    <property type="entry name" value="ATP-synt_ab"/>
    <property type="match status" value="1"/>
</dbReference>
<dbReference type="Pfam" id="PF00306">
    <property type="entry name" value="ATP-synt_ab_C"/>
    <property type="match status" value="1"/>
</dbReference>
<dbReference type="Pfam" id="PF02874">
    <property type="entry name" value="ATP-synt_ab_N"/>
    <property type="match status" value="1"/>
</dbReference>
<dbReference type="SUPFAM" id="SSF47917">
    <property type="entry name" value="C-terminal domain of alpha and beta subunits of F1 ATP synthase"/>
    <property type="match status" value="1"/>
</dbReference>
<dbReference type="SUPFAM" id="SSF50615">
    <property type="entry name" value="N-terminal domain of alpha and beta subunits of F1 ATP synthase"/>
    <property type="match status" value="1"/>
</dbReference>
<dbReference type="SUPFAM" id="SSF52540">
    <property type="entry name" value="P-loop containing nucleoside triphosphate hydrolases"/>
    <property type="match status" value="1"/>
</dbReference>
<dbReference type="PROSITE" id="PS00152">
    <property type="entry name" value="ATPASE_ALPHA_BETA"/>
    <property type="match status" value="1"/>
</dbReference>
<name>ATPA_HYDCU</name>
<evidence type="ECO:0000255" key="1">
    <source>
        <dbReference type="HAMAP-Rule" id="MF_01346"/>
    </source>
</evidence>
<accession>Q31DL8</accession>
<keyword id="KW-0066">ATP synthesis</keyword>
<keyword id="KW-0067">ATP-binding</keyword>
<keyword id="KW-0997">Cell inner membrane</keyword>
<keyword id="KW-1003">Cell membrane</keyword>
<keyword id="KW-0139">CF(1)</keyword>
<keyword id="KW-0375">Hydrogen ion transport</keyword>
<keyword id="KW-0406">Ion transport</keyword>
<keyword id="KW-0472">Membrane</keyword>
<keyword id="KW-0547">Nucleotide-binding</keyword>
<keyword id="KW-1278">Translocase</keyword>
<keyword id="KW-0813">Transport</keyword>
<protein>
    <recommendedName>
        <fullName evidence="1">ATP synthase subunit alpha</fullName>
        <ecNumber evidence="1">7.1.2.2</ecNumber>
    </recommendedName>
    <alternativeName>
        <fullName evidence="1">ATP synthase F1 sector subunit alpha</fullName>
    </alternativeName>
    <alternativeName>
        <fullName evidence="1">F-ATPase subunit alpha</fullName>
    </alternativeName>
</protein>
<reference key="1">
    <citation type="journal article" date="2006" name="PLoS Biol.">
        <title>The genome of deep-sea vent chemolithoautotroph Thiomicrospira crunogena XCL-2.</title>
        <authorList>
            <person name="Scott K.M."/>
            <person name="Sievert S.M."/>
            <person name="Abril F.N."/>
            <person name="Ball L.A."/>
            <person name="Barrett C.J."/>
            <person name="Blake R.A."/>
            <person name="Boller A.J."/>
            <person name="Chain P.S.G."/>
            <person name="Clark J.A."/>
            <person name="Davis C.R."/>
            <person name="Detter C."/>
            <person name="Do K.F."/>
            <person name="Dobrinski K.P."/>
            <person name="Faza B.I."/>
            <person name="Fitzpatrick K.A."/>
            <person name="Freyermuth S.K."/>
            <person name="Harmer T.L."/>
            <person name="Hauser L.J."/>
            <person name="Huegler M."/>
            <person name="Kerfeld C.A."/>
            <person name="Klotz M.G."/>
            <person name="Kong W.W."/>
            <person name="Land M."/>
            <person name="Lapidus A."/>
            <person name="Larimer F.W."/>
            <person name="Longo D.L."/>
            <person name="Lucas S."/>
            <person name="Malfatti S.A."/>
            <person name="Massey S.E."/>
            <person name="Martin D.D."/>
            <person name="McCuddin Z."/>
            <person name="Meyer F."/>
            <person name="Moore J.L."/>
            <person name="Ocampo L.H. Jr."/>
            <person name="Paul J.H."/>
            <person name="Paulsen I.T."/>
            <person name="Reep D.K."/>
            <person name="Ren Q."/>
            <person name="Ross R.L."/>
            <person name="Sato P.Y."/>
            <person name="Thomas P."/>
            <person name="Tinkham L.E."/>
            <person name="Zeruth G.T."/>
        </authorList>
    </citation>
    <scope>NUCLEOTIDE SEQUENCE [LARGE SCALE GENOMIC DNA]</scope>
    <source>
        <strain>DSM 25203 / XCL-2</strain>
    </source>
</reference>
<comment type="function">
    <text evidence="1">Produces ATP from ADP in the presence of a proton gradient across the membrane. The alpha chain is a regulatory subunit.</text>
</comment>
<comment type="catalytic activity">
    <reaction evidence="1">
        <text>ATP + H2O + 4 H(+)(in) = ADP + phosphate + 5 H(+)(out)</text>
        <dbReference type="Rhea" id="RHEA:57720"/>
        <dbReference type="ChEBI" id="CHEBI:15377"/>
        <dbReference type="ChEBI" id="CHEBI:15378"/>
        <dbReference type="ChEBI" id="CHEBI:30616"/>
        <dbReference type="ChEBI" id="CHEBI:43474"/>
        <dbReference type="ChEBI" id="CHEBI:456216"/>
        <dbReference type="EC" id="7.1.2.2"/>
    </reaction>
</comment>
<comment type="subunit">
    <text evidence="1">F-type ATPases have 2 components, CF(1) - the catalytic core - and CF(0) - the membrane proton channel. CF(1) has five subunits: alpha(3), beta(3), gamma(1), delta(1), epsilon(1). CF(0) has three main subunits: a(1), b(2) and c(9-12). The alpha and beta chains form an alternating ring which encloses part of the gamma chain. CF(1) is attached to CF(0) by a central stalk formed by the gamma and epsilon chains, while a peripheral stalk is formed by the delta and b chains.</text>
</comment>
<comment type="subcellular location">
    <subcellularLocation>
        <location evidence="1">Cell inner membrane</location>
        <topology evidence="1">Peripheral membrane protein</topology>
    </subcellularLocation>
</comment>
<comment type="similarity">
    <text evidence="1">Belongs to the ATPase alpha/beta chains family.</text>
</comment>